<reference key="1">
    <citation type="journal article" date="1998" name="DNA Res.">
        <title>Structural analysis of Arabidopsis thaliana chromosome 5. VI. Sequence features of the regions of 1,367,185 bp covered by 19 physically assigned P1 and TAC clones.</title>
        <authorList>
            <person name="Kotani H."/>
            <person name="Nakamura Y."/>
            <person name="Sato S."/>
            <person name="Asamizu E."/>
            <person name="Kaneko T."/>
            <person name="Miyajima N."/>
            <person name="Tabata S."/>
        </authorList>
    </citation>
    <scope>NUCLEOTIDE SEQUENCE [LARGE SCALE GENOMIC DNA]</scope>
    <source>
        <strain>cv. Columbia</strain>
    </source>
</reference>
<reference key="2">
    <citation type="journal article" date="2017" name="Plant J.">
        <title>Araport11: a complete reannotation of the Arabidopsis thaliana reference genome.</title>
        <authorList>
            <person name="Cheng C.Y."/>
            <person name="Krishnakumar V."/>
            <person name="Chan A.P."/>
            <person name="Thibaud-Nissen F."/>
            <person name="Schobel S."/>
            <person name="Town C.D."/>
        </authorList>
    </citation>
    <scope>GENOME REANNOTATION</scope>
    <source>
        <strain>cv. Columbia</strain>
    </source>
</reference>
<reference key="3">
    <citation type="submission" date="2009-03" db="EMBL/GenBank/DDBJ databases">
        <title>ORF cloning and analysis of Arabidopsis transcription factor genes.</title>
        <authorList>
            <person name="Fujita M."/>
            <person name="Mizukado S."/>
            <person name="Seki M."/>
            <person name="Shinozaki K."/>
            <person name="Mitsuda N."/>
            <person name="Takiguchi Y."/>
            <person name="Takagi M."/>
        </authorList>
    </citation>
    <scope>NUCLEOTIDE SEQUENCE [LARGE SCALE MRNA]</scope>
</reference>
<comment type="function">
    <text evidence="1">Putative transcription factor that may be involved in the ethylene response pathway.</text>
</comment>
<comment type="subcellular location">
    <subcellularLocation>
        <location evidence="1">Nucleus</location>
    </subcellularLocation>
</comment>
<comment type="similarity">
    <text evidence="4">Belongs to the EIN3 family.</text>
</comment>
<organism>
    <name type="scientific">Arabidopsis thaliana</name>
    <name type="common">Mouse-ear cress</name>
    <dbReference type="NCBI Taxonomy" id="3702"/>
    <lineage>
        <taxon>Eukaryota</taxon>
        <taxon>Viridiplantae</taxon>
        <taxon>Streptophyta</taxon>
        <taxon>Embryophyta</taxon>
        <taxon>Tracheophyta</taxon>
        <taxon>Spermatophyta</taxon>
        <taxon>Magnoliopsida</taxon>
        <taxon>eudicotyledons</taxon>
        <taxon>Gunneridae</taxon>
        <taxon>Pentapetalae</taxon>
        <taxon>rosids</taxon>
        <taxon>malvids</taxon>
        <taxon>Brassicales</taxon>
        <taxon>Brassicaceae</taxon>
        <taxon>Camelineae</taxon>
        <taxon>Arabidopsis</taxon>
    </lineage>
</organism>
<name>EIL5_ARATH</name>
<keyword id="KW-0175">Coiled coil</keyword>
<keyword id="KW-0936">Ethylene signaling pathway</keyword>
<keyword id="KW-0539">Nucleus</keyword>
<keyword id="KW-1185">Reference proteome</keyword>
<keyword id="KW-0804">Transcription</keyword>
<keyword id="KW-0805">Transcription regulation</keyword>
<proteinExistence type="evidence at transcript level"/>
<feature type="chain" id="PRO_0000113503" description="ETHYLENE INSENSITIVE 3-like 5 protein">
    <location>
        <begin position="1"/>
        <end position="557"/>
    </location>
</feature>
<feature type="region of interest" description="Disordered" evidence="3">
    <location>
        <begin position="1"/>
        <end position="23"/>
    </location>
</feature>
<feature type="region of interest" description="Disordered" evidence="3">
    <location>
        <begin position="61"/>
        <end position="96"/>
    </location>
</feature>
<feature type="coiled-coil region" evidence="2">
    <location>
        <begin position="270"/>
        <end position="311"/>
    </location>
</feature>
<feature type="compositionally biased region" description="Low complexity" evidence="3">
    <location>
        <begin position="64"/>
        <end position="82"/>
    </location>
</feature>
<accession>Q9FJQ5</accession>
<accession>C0SVW1</accession>
<evidence type="ECO:0000250" key="1"/>
<evidence type="ECO:0000255" key="2"/>
<evidence type="ECO:0000256" key="3">
    <source>
        <dbReference type="SAM" id="MobiDB-lite"/>
    </source>
</evidence>
<evidence type="ECO:0000305" key="4"/>
<protein>
    <recommendedName>
        <fullName>ETHYLENE INSENSITIVE 3-like 5 protein</fullName>
    </recommendedName>
</protein>
<sequence>MVEVQDLEPLSPIQDYDEDDLEEDVDEFERFGEEISYDDLKKRMWKDRNLMCKLKQQKRDNLNSVISSPSSSTSASSSSSSSVIVRRTEASRRKKMARSQDSVLKYMMKIMEVCKAQGFVYGIVPEKGKPVTGSSDSLRRWWKENVQFDQTAPNAVSDYLTLAAAQLISSNESLDPNSYIHMLHELQDTTLGSLLSALMQHCVPPQRRFPLEKGLAPPWWPNGTELWWGEQGAAAFEHGPPPYRKPHDLRKAWKVSVLAAVIKHMSPNLERVRRLARQSKCLQDKMMAKETDTWSRVLNQEEARLNRLKISDDEDEDRDQEQARFTCFDQEPSLNTCFIVGQDQEPLGSMRKDKRVDQEFSSNDCFLVAQDQEPRKGKKADQEWSPNSCFLVDQEPLGNKRKGEFVEKEAMLSNVYTCQNSSCPSSDVSLGFVDKNLRTGHEIECLYGTPELVNQSSGGGSDGFVRSITTSDDDYSASSKAEDTRDYHNQDGNWLDYLWFERLHDLNFSDQGFEDQTSTVDLNQLPDHSDSNQTMNEDDISLWDMGCEDKDIYMSQD</sequence>
<dbReference type="EMBL" id="AB013395">
    <property type="protein sequence ID" value="BAB11646.1"/>
    <property type="molecule type" value="Genomic_DNA"/>
</dbReference>
<dbReference type="EMBL" id="CP002688">
    <property type="protein sequence ID" value="AED98002.1"/>
    <property type="molecule type" value="Genomic_DNA"/>
</dbReference>
<dbReference type="EMBL" id="AB493814">
    <property type="protein sequence ID" value="BAH30652.1"/>
    <property type="molecule type" value="mRNA"/>
</dbReference>
<dbReference type="RefSeq" id="NP_201315.1">
    <property type="nucleotide sequence ID" value="NM_125909.2"/>
</dbReference>
<dbReference type="SMR" id="Q9FJQ5"/>
<dbReference type="BioGRID" id="21876">
    <property type="interactions" value="1"/>
</dbReference>
<dbReference type="FunCoup" id="Q9FJQ5">
    <property type="interactions" value="364"/>
</dbReference>
<dbReference type="IntAct" id="Q9FJQ5">
    <property type="interactions" value="1"/>
</dbReference>
<dbReference type="STRING" id="3702.Q9FJQ5"/>
<dbReference type="PaxDb" id="3702-AT5G65100.1"/>
<dbReference type="ProteomicsDB" id="222638"/>
<dbReference type="EnsemblPlants" id="AT5G65100.1">
    <property type="protein sequence ID" value="AT5G65100.1"/>
    <property type="gene ID" value="AT5G65100"/>
</dbReference>
<dbReference type="GeneID" id="836634"/>
<dbReference type="Gramene" id="AT5G65100.1">
    <property type="protein sequence ID" value="AT5G65100.1"/>
    <property type="gene ID" value="AT5G65100"/>
</dbReference>
<dbReference type="KEGG" id="ath:AT5G65100"/>
<dbReference type="Araport" id="AT5G65100"/>
<dbReference type="TAIR" id="AT5G65100"/>
<dbReference type="eggNOG" id="ENOG502QWMS">
    <property type="taxonomic scope" value="Eukaryota"/>
</dbReference>
<dbReference type="HOGENOM" id="CLU_027306_3_0_1"/>
<dbReference type="InParanoid" id="Q9FJQ5"/>
<dbReference type="OMA" id="IHMLHEL"/>
<dbReference type="OrthoDB" id="2017676at2759"/>
<dbReference type="PhylomeDB" id="Q9FJQ5"/>
<dbReference type="PRO" id="PR:Q9FJQ5"/>
<dbReference type="Proteomes" id="UP000006548">
    <property type="component" value="Chromosome 5"/>
</dbReference>
<dbReference type="ExpressionAtlas" id="Q9FJQ5">
    <property type="expression patterns" value="baseline and differential"/>
</dbReference>
<dbReference type="GO" id="GO:0005634">
    <property type="term" value="C:nucleus"/>
    <property type="evidence" value="ECO:0007669"/>
    <property type="project" value="UniProtKB-SubCell"/>
</dbReference>
<dbReference type="GO" id="GO:0003700">
    <property type="term" value="F:DNA-binding transcription factor activity"/>
    <property type="evidence" value="ECO:0000250"/>
    <property type="project" value="TAIR"/>
</dbReference>
<dbReference type="GO" id="GO:0009873">
    <property type="term" value="P:ethylene-activated signaling pathway"/>
    <property type="evidence" value="ECO:0007669"/>
    <property type="project" value="UniProtKB-KW"/>
</dbReference>
<dbReference type="GO" id="GO:0006355">
    <property type="term" value="P:regulation of DNA-templated transcription"/>
    <property type="evidence" value="ECO:0000304"/>
    <property type="project" value="TAIR"/>
</dbReference>
<dbReference type="FunFam" id="1.10.3180.10:FF:000003">
    <property type="entry name" value="Ethylene insensitive 3 family protein"/>
    <property type="match status" value="1"/>
</dbReference>
<dbReference type="FunFam" id="1.10.3180.10:FF:000001">
    <property type="entry name" value="Ethylene insensitive 3-like 1"/>
    <property type="match status" value="1"/>
</dbReference>
<dbReference type="Gene3D" id="1.10.3180.10">
    <property type="entry name" value="DNA-binding domain of EIN3-like"/>
    <property type="match status" value="2"/>
</dbReference>
<dbReference type="InterPro" id="IPR006957">
    <property type="entry name" value="EIN3"/>
</dbReference>
<dbReference type="InterPro" id="IPR047091">
    <property type="entry name" value="EIN3-like_DNA-bd"/>
</dbReference>
<dbReference type="InterPro" id="IPR023278">
    <property type="entry name" value="Ethylene_insens-like_DNA-bd"/>
</dbReference>
<dbReference type="PANTHER" id="PTHR33305">
    <property type="entry name" value="ETHYLENE INSENSITIVE 3-LIKE 2 PROTEIN"/>
    <property type="match status" value="1"/>
</dbReference>
<dbReference type="PANTHER" id="PTHR33305:SF29">
    <property type="entry name" value="ETHYLENE INSENSITIVE 3-LIKE 5 PROTEIN"/>
    <property type="match status" value="1"/>
</dbReference>
<dbReference type="Pfam" id="PF04873">
    <property type="entry name" value="EIN3_DNA-bd"/>
    <property type="match status" value="1"/>
</dbReference>
<dbReference type="SUPFAM" id="SSF116768">
    <property type="entry name" value="DNA-binding domain of EIN3-like"/>
    <property type="match status" value="1"/>
</dbReference>
<gene>
    <name type="primary">EIL5</name>
    <name type="ordered locus">At5g65100</name>
    <name type="ORF">MQN23.3</name>
</gene>